<accession>Q8NGH9</accession>
<accession>Q6IFG0</accession>
<name>O52E4_HUMAN</name>
<dbReference type="EMBL" id="AB065817">
    <property type="protein sequence ID" value="BAC06036.1"/>
    <property type="molecule type" value="Genomic_DNA"/>
</dbReference>
<dbReference type="EMBL" id="BK004302">
    <property type="protein sequence ID" value="DAA04700.1"/>
    <property type="molecule type" value="Genomic_DNA"/>
</dbReference>
<dbReference type="CCDS" id="CCDS31401.1"/>
<dbReference type="RefSeq" id="NP_001005165.1">
    <property type="nucleotide sequence ID" value="NM_001005165.2"/>
</dbReference>
<dbReference type="SMR" id="Q8NGH9"/>
<dbReference type="FunCoup" id="Q8NGH9">
    <property type="interactions" value="460"/>
</dbReference>
<dbReference type="STRING" id="9606.ENSP00000493085"/>
<dbReference type="GlyCosmos" id="Q8NGH9">
    <property type="glycosylation" value="1 site, No reported glycans"/>
</dbReference>
<dbReference type="GlyGen" id="Q8NGH9">
    <property type="glycosylation" value="1 site"/>
</dbReference>
<dbReference type="BioMuta" id="OR52E4"/>
<dbReference type="DMDM" id="38372697"/>
<dbReference type="PaxDb" id="9606-ENSP00000321426"/>
<dbReference type="PeptideAtlas" id="Q8NGH9"/>
<dbReference type="Antibodypedia" id="57953">
    <property type="antibodies" value="49 antibodies from 15 providers"/>
</dbReference>
<dbReference type="DNASU" id="390081"/>
<dbReference type="Ensembl" id="ENST00000641726.1">
    <property type="protein sequence ID" value="ENSP00000493085.1"/>
    <property type="gene ID" value="ENSG00000180974.5"/>
</dbReference>
<dbReference type="GeneID" id="390081"/>
<dbReference type="KEGG" id="hsa:390081"/>
<dbReference type="MANE-Select" id="ENST00000641726.1">
    <property type="protein sequence ID" value="ENSP00000493085.1"/>
    <property type="RefSeq nucleotide sequence ID" value="NM_001005165.2"/>
    <property type="RefSeq protein sequence ID" value="NP_001005165.1"/>
</dbReference>
<dbReference type="UCSC" id="uc010qzs.3">
    <property type="organism name" value="human"/>
</dbReference>
<dbReference type="AGR" id="HGNC:15213"/>
<dbReference type="CTD" id="390081"/>
<dbReference type="DisGeNET" id="390081"/>
<dbReference type="GeneCards" id="OR52E4"/>
<dbReference type="HGNC" id="HGNC:15213">
    <property type="gene designation" value="OR52E4"/>
</dbReference>
<dbReference type="HPA" id="ENSG00000180974">
    <property type="expression patterns" value="Not detected"/>
</dbReference>
<dbReference type="neXtProt" id="NX_Q8NGH9"/>
<dbReference type="PharmGKB" id="PA32405"/>
<dbReference type="VEuPathDB" id="HostDB:ENSG00000180974"/>
<dbReference type="eggNOG" id="ENOG502RNPB">
    <property type="taxonomic scope" value="Eukaryota"/>
</dbReference>
<dbReference type="GeneTree" id="ENSGT01090000260056"/>
<dbReference type="HOGENOM" id="CLU_012526_0_0_1"/>
<dbReference type="InParanoid" id="Q8NGH9"/>
<dbReference type="OMA" id="ETIHIWI"/>
<dbReference type="OrthoDB" id="5969463at2759"/>
<dbReference type="PAN-GO" id="Q8NGH9">
    <property type="GO annotations" value="0 GO annotations based on evolutionary models"/>
</dbReference>
<dbReference type="PhylomeDB" id="Q8NGH9"/>
<dbReference type="TreeFam" id="TF343679"/>
<dbReference type="PathwayCommons" id="Q8NGH9"/>
<dbReference type="Reactome" id="R-HSA-9752946">
    <property type="pathway name" value="Expression and translocation of olfactory receptors"/>
</dbReference>
<dbReference type="BioGRID-ORCS" id="390081">
    <property type="hits" value="15 hits in 750 CRISPR screens"/>
</dbReference>
<dbReference type="GeneWiki" id="OR52E4"/>
<dbReference type="GenomeRNAi" id="390081"/>
<dbReference type="Pharos" id="Q8NGH9">
    <property type="development level" value="Tdark"/>
</dbReference>
<dbReference type="PRO" id="PR:Q8NGH9"/>
<dbReference type="Proteomes" id="UP000005640">
    <property type="component" value="Chromosome 11"/>
</dbReference>
<dbReference type="RNAct" id="Q8NGH9">
    <property type="molecule type" value="protein"/>
</dbReference>
<dbReference type="Bgee" id="ENSG00000180974">
    <property type="expression patterns" value="Expressed in male germ line stem cell (sensu Vertebrata) in testis and 1 other cell type or tissue"/>
</dbReference>
<dbReference type="GO" id="GO:0005886">
    <property type="term" value="C:plasma membrane"/>
    <property type="evidence" value="ECO:0000318"/>
    <property type="project" value="GO_Central"/>
</dbReference>
<dbReference type="GO" id="GO:0004930">
    <property type="term" value="F:G protein-coupled receptor activity"/>
    <property type="evidence" value="ECO:0007669"/>
    <property type="project" value="UniProtKB-KW"/>
</dbReference>
<dbReference type="GO" id="GO:0004984">
    <property type="term" value="F:olfactory receptor activity"/>
    <property type="evidence" value="ECO:0000318"/>
    <property type="project" value="GO_Central"/>
</dbReference>
<dbReference type="CDD" id="cd15952">
    <property type="entry name" value="7tmA_OR52E-like"/>
    <property type="match status" value="1"/>
</dbReference>
<dbReference type="FunFam" id="1.20.1070.10:FF:000006">
    <property type="entry name" value="Olfactory receptor"/>
    <property type="match status" value="1"/>
</dbReference>
<dbReference type="Gene3D" id="1.20.1070.10">
    <property type="entry name" value="Rhodopsin 7-helix transmembrane proteins"/>
    <property type="match status" value="1"/>
</dbReference>
<dbReference type="InterPro" id="IPR000276">
    <property type="entry name" value="GPCR_Rhodpsn"/>
</dbReference>
<dbReference type="InterPro" id="IPR017452">
    <property type="entry name" value="GPCR_Rhodpsn_7TM"/>
</dbReference>
<dbReference type="InterPro" id="IPR000725">
    <property type="entry name" value="Olfact_rcpt"/>
</dbReference>
<dbReference type="InterPro" id="IPR050402">
    <property type="entry name" value="OR51/52/56-like"/>
</dbReference>
<dbReference type="PANTHER" id="PTHR26450:SF13">
    <property type="entry name" value="OLFACTORY RECEPTOR 52E4"/>
    <property type="match status" value="1"/>
</dbReference>
<dbReference type="PANTHER" id="PTHR26450">
    <property type="entry name" value="OLFACTORY RECEPTOR 56B1-RELATED"/>
    <property type="match status" value="1"/>
</dbReference>
<dbReference type="Pfam" id="PF13853">
    <property type="entry name" value="7tm_4"/>
    <property type="match status" value="1"/>
</dbReference>
<dbReference type="PRINTS" id="PR00237">
    <property type="entry name" value="GPCRRHODOPSN"/>
</dbReference>
<dbReference type="PRINTS" id="PR00245">
    <property type="entry name" value="OLFACTORYR"/>
</dbReference>
<dbReference type="SUPFAM" id="SSF81321">
    <property type="entry name" value="Family A G protein-coupled receptor-like"/>
    <property type="match status" value="1"/>
</dbReference>
<dbReference type="PROSITE" id="PS00237">
    <property type="entry name" value="G_PROTEIN_RECEP_F1_1"/>
    <property type="match status" value="1"/>
</dbReference>
<dbReference type="PROSITE" id="PS50262">
    <property type="entry name" value="G_PROTEIN_RECEP_F1_2"/>
    <property type="match status" value="1"/>
</dbReference>
<organism>
    <name type="scientific">Homo sapiens</name>
    <name type="common">Human</name>
    <dbReference type="NCBI Taxonomy" id="9606"/>
    <lineage>
        <taxon>Eukaryota</taxon>
        <taxon>Metazoa</taxon>
        <taxon>Chordata</taxon>
        <taxon>Craniata</taxon>
        <taxon>Vertebrata</taxon>
        <taxon>Euteleostomi</taxon>
        <taxon>Mammalia</taxon>
        <taxon>Eutheria</taxon>
        <taxon>Euarchontoglires</taxon>
        <taxon>Primates</taxon>
        <taxon>Haplorrhini</taxon>
        <taxon>Catarrhini</taxon>
        <taxon>Hominidae</taxon>
        <taxon>Homo</taxon>
    </lineage>
</organism>
<feature type="chain" id="PRO_0000150773" description="Olfactory receptor 52E4">
    <location>
        <begin position="1"/>
        <end position="312"/>
    </location>
</feature>
<feature type="topological domain" description="Extracellular" evidence="1">
    <location>
        <begin position="1"/>
        <end position="27"/>
    </location>
</feature>
<feature type="transmembrane region" description="Helical; Name=1" evidence="1">
    <location>
        <begin position="28"/>
        <end position="48"/>
    </location>
</feature>
<feature type="topological domain" description="Cytoplasmic" evidence="1">
    <location>
        <begin position="49"/>
        <end position="56"/>
    </location>
</feature>
<feature type="transmembrane region" description="Helical; Name=2" evidence="1">
    <location>
        <begin position="57"/>
        <end position="77"/>
    </location>
</feature>
<feature type="topological domain" description="Extracellular" evidence="1">
    <location>
        <begin position="78"/>
        <end position="101"/>
    </location>
</feature>
<feature type="transmembrane region" description="Helical; Name=3" evidence="1">
    <location>
        <begin position="102"/>
        <end position="122"/>
    </location>
</feature>
<feature type="topological domain" description="Cytoplasmic" evidence="1">
    <location>
        <begin position="123"/>
        <end position="141"/>
    </location>
</feature>
<feature type="transmembrane region" description="Helical; Name=4" evidence="1">
    <location>
        <begin position="142"/>
        <end position="162"/>
    </location>
</feature>
<feature type="topological domain" description="Extracellular" evidence="1">
    <location>
        <begin position="163"/>
        <end position="198"/>
    </location>
</feature>
<feature type="transmembrane region" description="Helical; Name=5" evidence="1">
    <location>
        <begin position="199"/>
        <end position="218"/>
    </location>
</feature>
<feature type="topological domain" description="Cytoplasmic" evidence="1">
    <location>
        <begin position="219"/>
        <end position="238"/>
    </location>
</feature>
<feature type="transmembrane region" description="Helical; Name=6" evidence="1">
    <location>
        <begin position="239"/>
        <end position="259"/>
    </location>
</feature>
<feature type="topological domain" description="Extracellular" evidence="1">
    <location>
        <begin position="260"/>
        <end position="274"/>
    </location>
</feature>
<feature type="transmembrane region" description="Helical; Name=7" evidence="1">
    <location>
        <begin position="275"/>
        <end position="295"/>
    </location>
</feature>
<feature type="topological domain" description="Cytoplasmic" evidence="1">
    <location>
        <begin position="296"/>
        <end position="312"/>
    </location>
</feature>
<feature type="glycosylation site" description="N-linked (GlcNAc...) asparagine" evidence="1">
    <location>
        <position position="5"/>
    </location>
</feature>
<feature type="disulfide bond" evidence="2">
    <location>
        <begin position="99"/>
        <end position="191"/>
    </location>
</feature>
<feature type="sequence variant" id="VAR_034335" description="In dbSNP:rs16914094.">
    <original>F</original>
    <variation>L</variation>
    <location>
        <position position="49"/>
    </location>
</feature>
<feature type="sequence variant" id="VAR_024147" description="In dbSNP:rs4758168.">
    <original>V</original>
    <variation>I</variation>
    <location>
        <position position="176"/>
    </location>
</feature>
<feature type="sequence variant" id="VAR_024148" description="In dbSNP:rs4757986.">
    <original>R</original>
    <variation>M</variation>
    <location>
        <position position="184"/>
    </location>
</feature>
<feature type="sequence variant" id="VAR_062082" description="In dbSNP:rs11823828.">
    <original>F</original>
    <variation>L</variation>
    <location>
        <position position="227"/>
    </location>
</feature>
<feature type="sequence variant" id="VAR_034336" description="In dbSNP:rs4757987.">
    <original>R</original>
    <variation>H</variation>
    <location>
        <position position="228"/>
    </location>
</feature>
<feature type="sequence variant" id="VAR_034337" description="In dbSNP:rs11823842.">
    <original>F</original>
    <variation>L</variation>
    <location>
        <position position="257"/>
    </location>
</feature>
<keyword id="KW-1003">Cell membrane</keyword>
<keyword id="KW-1015">Disulfide bond</keyword>
<keyword id="KW-0297">G-protein coupled receptor</keyword>
<keyword id="KW-0325">Glycoprotein</keyword>
<keyword id="KW-0472">Membrane</keyword>
<keyword id="KW-0552">Olfaction</keyword>
<keyword id="KW-0675">Receptor</keyword>
<keyword id="KW-1185">Reference proteome</keyword>
<keyword id="KW-0716">Sensory transduction</keyword>
<keyword id="KW-0807">Transducer</keyword>
<keyword id="KW-0812">Transmembrane</keyword>
<keyword id="KW-1133">Transmembrane helix</keyword>
<gene>
    <name type="primary">OR52E4</name>
</gene>
<comment type="function">
    <text evidence="3">Odorant receptor.</text>
</comment>
<comment type="subcellular location">
    <subcellularLocation>
        <location>Cell membrane</location>
        <topology>Multi-pass membrane protein</topology>
    </subcellularLocation>
</comment>
<comment type="similarity">
    <text evidence="2">Belongs to the G-protein coupled receptor 1 family.</text>
</comment>
<comment type="online information" name="Human Olfactory Receptor Data Exploratorium (HORDE)">
    <link uri="http://genome.weizmann.ac.il/horde/card/index/symbol:OR52E4"/>
</comment>
<reference key="1">
    <citation type="submission" date="2001-07" db="EMBL/GenBank/DDBJ databases">
        <title>Genome-wide discovery and analysis of human seven transmembrane helix receptor genes.</title>
        <authorList>
            <person name="Suwa M."/>
            <person name="Sato T."/>
            <person name="Okouchi I."/>
            <person name="Arita M."/>
            <person name="Futami K."/>
            <person name="Matsumoto S."/>
            <person name="Tsutsumi S."/>
            <person name="Aburatani H."/>
            <person name="Asai K."/>
            <person name="Akiyama Y."/>
        </authorList>
    </citation>
    <scope>NUCLEOTIDE SEQUENCE [GENOMIC DNA]</scope>
</reference>
<reference key="2">
    <citation type="journal article" date="2004" name="Proc. Natl. Acad. Sci. U.S.A.">
        <title>The human olfactory receptor gene family.</title>
        <authorList>
            <person name="Malnic B."/>
            <person name="Godfrey P.A."/>
            <person name="Buck L.B."/>
        </authorList>
    </citation>
    <scope>IDENTIFICATION</scope>
</reference>
<reference key="3">
    <citation type="journal article" date="2004" name="Proc. Natl. Acad. Sci. U.S.A.">
        <authorList>
            <person name="Malnic B."/>
            <person name="Godfrey P.A."/>
            <person name="Buck L.B."/>
        </authorList>
    </citation>
    <scope>ERRATUM OF PUBMED:14983052</scope>
</reference>
<proteinExistence type="inferred from homology"/>
<sequence>MPSINDTHFYPPFFLLLGIPGLDTLHIWISFPFCIVYLIAIVGNMTILFVIKTEHSLHQPMFYFLAMLSMIDLGLSTSTIPKMLGIFWFNLQEISFGGCLLQMFFIHMFTGMETVLLVVMAYDRFVAICNPLQYTMILTNKTISILASVVVGRNLVLVTPFVFLILRLPFCGHNIVPHTYCEHRGLAGLACAPIKINIIYGLMVISYIIVDVILIASSYVLILRAVFRLPSQDVRLKAFNTCGSHVCVMLCFYTPAFFSFMTHRFGQNIPHYIHILLANLYVVVPPALNPVIYGVRTKQIREQIVKIFVQKE</sequence>
<protein>
    <recommendedName>
        <fullName>Olfactory receptor 52E4</fullName>
    </recommendedName>
    <alternativeName>
        <fullName>Olfactory receptor OR11-55</fullName>
    </alternativeName>
</protein>
<evidence type="ECO:0000255" key="1"/>
<evidence type="ECO:0000255" key="2">
    <source>
        <dbReference type="PROSITE-ProRule" id="PRU00521"/>
    </source>
</evidence>
<evidence type="ECO:0000305" key="3"/>